<protein>
    <recommendedName>
        <fullName evidence="1">Protein translocase subunit SecA</fullName>
        <ecNumber evidence="1">7.4.2.8</ecNumber>
    </recommendedName>
</protein>
<accession>A8FHW5</accession>
<keyword id="KW-0067">ATP-binding</keyword>
<keyword id="KW-1003">Cell membrane</keyword>
<keyword id="KW-0963">Cytoplasm</keyword>
<keyword id="KW-0472">Membrane</keyword>
<keyword id="KW-0479">Metal-binding</keyword>
<keyword id="KW-0547">Nucleotide-binding</keyword>
<keyword id="KW-0653">Protein transport</keyword>
<keyword id="KW-1278">Translocase</keyword>
<keyword id="KW-0811">Translocation</keyword>
<keyword id="KW-0813">Transport</keyword>
<keyword id="KW-0862">Zinc</keyword>
<sequence length="841" mass="95346">MLGILNKVFDPTKRTISKYEKKANEIEALAQDFEKLSDEALRNKTIEFKEKLEKGQSVDDLLVEAFATVREASRRVTGMFPFKVQLMGGIALHEGNISEMKTGEGKTLTSTMPVYLNALSGKGVHIVTVNEYLASRDAEEMGKIFEFLGLTVGLNLNSLDKDEKREAYAADITYSTNNELGFDYLRDNMVLYKEQMVQRPLHYAVIDEVDSILIDEARTPLIISGQAAKSTKLYVQANAFVRTLKIEDDFTYDIKTKSVQLTESGMTKAEKAFGIENLFDVKHVALNHHIAQALKAHVAMQKDVDYVVEEGQVVIVDSFTGRLMKGRRYSEGLHQAIEAKEGLEVQNESMTLATITFQNYFRMYEKLSGMTGTAKTEEEEFRNIYNMQVVTIPTNQPVVRDDRPDLIYRTMEGKFKAVAEDVAQRYMTGQPVLVGTVAVETSELISKLLKNKGIPHQVLNAKNHEREAQIIEEAGQKGAVTIATNMAGRGTDIKLGEGVKELGGLAVIGTERHESRRIDNQLRGRSGRQGDPGITQFYLSMEDELMRRFGAERTMAMLDRFGMDDTTPIQSKMVSKAVESSQKRVEGNNFDSRKQLLQYDDVLRQQREVIYKQRFEVIDSDNLKSIVINMIQSSIERAVGSYTPKEELPEEWKLDGLVELINTNYLDEGAISVKDIYGKEADEITSFIMDRIKEKYDAKEETYGDEQMREFEKVIVLRAVDSKWMDHIDAMDQLRQGIHLRAYAQTNPLREYQMEGFAMFEHMVASIEDDVAKYVLKSEIQNNLEREEVVQGQTTAHQPQEGDEEKTVKKKPVRKVVDIGRNSPCHCGSGKKYKNCHGKTE</sequence>
<name>SECA_BACP2</name>
<gene>
    <name evidence="1" type="primary">secA</name>
    <name type="ordered locus">BPUM_3178</name>
</gene>
<proteinExistence type="inferred from homology"/>
<reference key="1">
    <citation type="journal article" date="2007" name="PLoS ONE">
        <title>Paradoxical DNA repair and peroxide resistance gene conservation in Bacillus pumilus SAFR-032.</title>
        <authorList>
            <person name="Gioia J."/>
            <person name="Yerrapragada S."/>
            <person name="Qin X."/>
            <person name="Jiang H."/>
            <person name="Igboeli O.C."/>
            <person name="Muzny D."/>
            <person name="Dugan-Rocha S."/>
            <person name="Ding Y."/>
            <person name="Hawes A."/>
            <person name="Liu W."/>
            <person name="Perez L."/>
            <person name="Kovar C."/>
            <person name="Dinh H."/>
            <person name="Lee S."/>
            <person name="Nazareth L."/>
            <person name="Blyth P."/>
            <person name="Holder M."/>
            <person name="Buhay C."/>
            <person name="Tirumalai M.R."/>
            <person name="Liu Y."/>
            <person name="Dasgupta I."/>
            <person name="Bokhetache L."/>
            <person name="Fujita M."/>
            <person name="Karouia F."/>
            <person name="Eswara Moorthy P."/>
            <person name="Siefert J."/>
            <person name="Uzman A."/>
            <person name="Buzumbo P."/>
            <person name="Verma A."/>
            <person name="Zwiya H."/>
            <person name="McWilliams B.D."/>
            <person name="Olowu A."/>
            <person name="Clinkenbeard K.D."/>
            <person name="Newcombe D."/>
            <person name="Golebiewski L."/>
            <person name="Petrosino J.F."/>
            <person name="Nicholson W.L."/>
            <person name="Fox G.E."/>
            <person name="Venkateswaran K."/>
            <person name="Highlander S.K."/>
            <person name="Weinstock G.M."/>
        </authorList>
    </citation>
    <scope>NUCLEOTIDE SEQUENCE [LARGE SCALE GENOMIC DNA]</scope>
    <source>
        <strain>SAFR-032</strain>
    </source>
</reference>
<dbReference type="EC" id="7.4.2.8" evidence="1"/>
<dbReference type="EMBL" id="CP000813">
    <property type="protein sequence ID" value="ABV63832.1"/>
    <property type="molecule type" value="Genomic_DNA"/>
</dbReference>
<dbReference type="RefSeq" id="WP_012011417.1">
    <property type="nucleotide sequence ID" value="NZ_VEIS01000025.1"/>
</dbReference>
<dbReference type="SMR" id="A8FHW5"/>
<dbReference type="STRING" id="315750.BPUM_3178"/>
<dbReference type="GeneID" id="5622468"/>
<dbReference type="KEGG" id="bpu:BPUM_3178"/>
<dbReference type="eggNOG" id="COG0653">
    <property type="taxonomic scope" value="Bacteria"/>
</dbReference>
<dbReference type="HOGENOM" id="CLU_005314_3_0_9"/>
<dbReference type="OrthoDB" id="9805579at2"/>
<dbReference type="Proteomes" id="UP000001355">
    <property type="component" value="Chromosome"/>
</dbReference>
<dbReference type="GO" id="GO:0031522">
    <property type="term" value="C:cell envelope Sec protein transport complex"/>
    <property type="evidence" value="ECO:0007669"/>
    <property type="project" value="TreeGrafter"/>
</dbReference>
<dbReference type="GO" id="GO:0005829">
    <property type="term" value="C:cytosol"/>
    <property type="evidence" value="ECO:0007669"/>
    <property type="project" value="TreeGrafter"/>
</dbReference>
<dbReference type="GO" id="GO:0005886">
    <property type="term" value="C:plasma membrane"/>
    <property type="evidence" value="ECO:0007669"/>
    <property type="project" value="UniProtKB-SubCell"/>
</dbReference>
<dbReference type="GO" id="GO:0005524">
    <property type="term" value="F:ATP binding"/>
    <property type="evidence" value="ECO:0007669"/>
    <property type="project" value="UniProtKB-UniRule"/>
</dbReference>
<dbReference type="GO" id="GO:0046872">
    <property type="term" value="F:metal ion binding"/>
    <property type="evidence" value="ECO:0007669"/>
    <property type="project" value="UniProtKB-KW"/>
</dbReference>
<dbReference type="GO" id="GO:0008564">
    <property type="term" value="F:protein-exporting ATPase activity"/>
    <property type="evidence" value="ECO:0007669"/>
    <property type="project" value="UniProtKB-EC"/>
</dbReference>
<dbReference type="GO" id="GO:0065002">
    <property type="term" value="P:intracellular protein transmembrane transport"/>
    <property type="evidence" value="ECO:0007669"/>
    <property type="project" value="UniProtKB-UniRule"/>
</dbReference>
<dbReference type="GO" id="GO:0017038">
    <property type="term" value="P:protein import"/>
    <property type="evidence" value="ECO:0007669"/>
    <property type="project" value="InterPro"/>
</dbReference>
<dbReference type="GO" id="GO:0006605">
    <property type="term" value="P:protein targeting"/>
    <property type="evidence" value="ECO:0007669"/>
    <property type="project" value="UniProtKB-UniRule"/>
</dbReference>
<dbReference type="GO" id="GO:0043952">
    <property type="term" value="P:protein transport by the Sec complex"/>
    <property type="evidence" value="ECO:0007669"/>
    <property type="project" value="TreeGrafter"/>
</dbReference>
<dbReference type="CDD" id="cd17928">
    <property type="entry name" value="DEXDc_SecA"/>
    <property type="match status" value="1"/>
</dbReference>
<dbReference type="CDD" id="cd18803">
    <property type="entry name" value="SF2_C_secA"/>
    <property type="match status" value="1"/>
</dbReference>
<dbReference type="FunFam" id="1.10.3060.10:FF:000002">
    <property type="entry name" value="Preprotein translocase subunit SecA"/>
    <property type="match status" value="1"/>
</dbReference>
<dbReference type="FunFam" id="3.40.50.300:FF:000429">
    <property type="entry name" value="Preprotein translocase subunit SecA"/>
    <property type="match status" value="1"/>
</dbReference>
<dbReference type="FunFam" id="3.90.1440.10:FF:000001">
    <property type="entry name" value="Preprotein translocase subunit SecA"/>
    <property type="match status" value="1"/>
</dbReference>
<dbReference type="Gene3D" id="1.10.3060.10">
    <property type="entry name" value="Helical scaffold and wing domains of SecA"/>
    <property type="match status" value="1"/>
</dbReference>
<dbReference type="Gene3D" id="3.40.50.300">
    <property type="entry name" value="P-loop containing nucleotide triphosphate hydrolases"/>
    <property type="match status" value="3"/>
</dbReference>
<dbReference type="Gene3D" id="3.90.1440.10">
    <property type="entry name" value="SecA, preprotein cross-linking domain"/>
    <property type="match status" value="1"/>
</dbReference>
<dbReference type="HAMAP" id="MF_01382">
    <property type="entry name" value="SecA"/>
    <property type="match status" value="1"/>
</dbReference>
<dbReference type="InterPro" id="IPR014001">
    <property type="entry name" value="Helicase_ATP-bd"/>
</dbReference>
<dbReference type="InterPro" id="IPR001650">
    <property type="entry name" value="Helicase_C-like"/>
</dbReference>
<dbReference type="InterPro" id="IPR027417">
    <property type="entry name" value="P-loop_NTPase"/>
</dbReference>
<dbReference type="InterPro" id="IPR004027">
    <property type="entry name" value="SEC_C_motif"/>
</dbReference>
<dbReference type="InterPro" id="IPR000185">
    <property type="entry name" value="SecA"/>
</dbReference>
<dbReference type="InterPro" id="IPR020937">
    <property type="entry name" value="SecA_CS"/>
</dbReference>
<dbReference type="InterPro" id="IPR011115">
    <property type="entry name" value="SecA_DEAD"/>
</dbReference>
<dbReference type="InterPro" id="IPR014018">
    <property type="entry name" value="SecA_motor_DEAD"/>
</dbReference>
<dbReference type="InterPro" id="IPR011130">
    <property type="entry name" value="SecA_preprotein_X-link_dom"/>
</dbReference>
<dbReference type="InterPro" id="IPR044722">
    <property type="entry name" value="SecA_SF2_C"/>
</dbReference>
<dbReference type="InterPro" id="IPR011116">
    <property type="entry name" value="SecA_Wing/Scaffold"/>
</dbReference>
<dbReference type="InterPro" id="IPR036266">
    <property type="entry name" value="SecA_Wing/Scaffold_sf"/>
</dbReference>
<dbReference type="InterPro" id="IPR036670">
    <property type="entry name" value="SecA_X-link_sf"/>
</dbReference>
<dbReference type="NCBIfam" id="NF006630">
    <property type="entry name" value="PRK09200.1"/>
    <property type="match status" value="1"/>
</dbReference>
<dbReference type="NCBIfam" id="NF009538">
    <property type="entry name" value="PRK12904.1"/>
    <property type="match status" value="1"/>
</dbReference>
<dbReference type="NCBIfam" id="TIGR00963">
    <property type="entry name" value="secA"/>
    <property type="match status" value="1"/>
</dbReference>
<dbReference type="PANTHER" id="PTHR30612:SF0">
    <property type="entry name" value="CHLOROPLAST PROTEIN-TRANSPORTING ATPASE"/>
    <property type="match status" value="1"/>
</dbReference>
<dbReference type="PANTHER" id="PTHR30612">
    <property type="entry name" value="SECA INNER MEMBRANE COMPONENT OF SEC PROTEIN SECRETION SYSTEM"/>
    <property type="match status" value="1"/>
</dbReference>
<dbReference type="Pfam" id="PF21090">
    <property type="entry name" value="P-loop_SecA"/>
    <property type="match status" value="1"/>
</dbReference>
<dbReference type="Pfam" id="PF02810">
    <property type="entry name" value="SEC-C"/>
    <property type="match status" value="1"/>
</dbReference>
<dbReference type="Pfam" id="PF07517">
    <property type="entry name" value="SecA_DEAD"/>
    <property type="match status" value="1"/>
</dbReference>
<dbReference type="Pfam" id="PF01043">
    <property type="entry name" value="SecA_PP_bind"/>
    <property type="match status" value="1"/>
</dbReference>
<dbReference type="Pfam" id="PF07516">
    <property type="entry name" value="SecA_SW"/>
    <property type="match status" value="1"/>
</dbReference>
<dbReference type="PRINTS" id="PR00906">
    <property type="entry name" value="SECA"/>
</dbReference>
<dbReference type="SMART" id="SM00957">
    <property type="entry name" value="SecA_DEAD"/>
    <property type="match status" value="1"/>
</dbReference>
<dbReference type="SMART" id="SM00958">
    <property type="entry name" value="SecA_PP_bind"/>
    <property type="match status" value="1"/>
</dbReference>
<dbReference type="SUPFAM" id="SSF81886">
    <property type="entry name" value="Helical scaffold and wing domains of SecA"/>
    <property type="match status" value="1"/>
</dbReference>
<dbReference type="SUPFAM" id="SSF52540">
    <property type="entry name" value="P-loop containing nucleoside triphosphate hydrolases"/>
    <property type="match status" value="2"/>
</dbReference>
<dbReference type="SUPFAM" id="SSF81767">
    <property type="entry name" value="Pre-protein crosslinking domain of SecA"/>
    <property type="match status" value="1"/>
</dbReference>
<dbReference type="PROSITE" id="PS01312">
    <property type="entry name" value="SECA"/>
    <property type="match status" value="1"/>
</dbReference>
<dbReference type="PROSITE" id="PS51196">
    <property type="entry name" value="SECA_MOTOR_DEAD"/>
    <property type="match status" value="1"/>
</dbReference>
<comment type="function">
    <text evidence="1">Part of the Sec protein translocase complex. Interacts with the SecYEG preprotein conducting channel. Has a central role in coupling the hydrolysis of ATP to the transfer of proteins into and across the cell membrane, serving as an ATP-driven molecular motor driving the stepwise translocation of polypeptide chains across the membrane.</text>
</comment>
<comment type="catalytic activity">
    <reaction evidence="1">
        <text>ATP + H2O + cellular proteinSide 1 = ADP + phosphate + cellular proteinSide 2.</text>
        <dbReference type="EC" id="7.4.2.8"/>
    </reaction>
</comment>
<comment type="cofactor">
    <cofactor evidence="1">
        <name>Zn(2+)</name>
        <dbReference type="ChEBI" id="CHEBI:29105"/>
    </cofactor>
    <text evidence="1">May bind 1 zinc ion per subunit.</text>
</comment>
<comment type="subunit">
    <text evidence="1">Monomer and homodimer. Part of the essential Sec protein translocation apparatus which comprises SecA, SecYEG and auxiliary proteins SecDF. Other proteins may also be involved.</text>
</comment>
<comment type="subcellular location">
    <subcellularLocation>
        <location evidence="1">Cell membrane</location>
        <topology evidence="1">Peripheral membrane protein</topology>
        <orientation evidence="1">Cytoplasmic side</orientation>
    </subcellularLocation>
    <subcellularLocation>
        <location evidence="1">Cytoplasm</location>
    </subcellularLocation>
    <text evidence="1">Distribution is 50-50.</text>
</comment>
<comment type="similarity">
    <text evidence="1">Belongs to the SecA family.</text>
</comment>
<evidence type="ECO:0000255" key="1">
    <source>
        <dbReference type="HAMAP-Rule" id="MF_01382"/>
    </source>
</evidence>
<evidence type="ECO:0000256" key="2">
    <source>
        <dbReference type="SAM" id="MobiDB-lite"/>
    </source>
</evidence>
<organism>
    <name type="scientific">Bacillus pumilus (strain SAFR-032)</name>
    <dbReference type="NCBI Taxonomy" id="315750"/>
    <lineage>
        <taxon>Bacteria</taxon>
        <taxon>Bacillati</taxon>
        <taxon>Bacillota</taxon>
        <taxon>Bacilli</taxon>
        <taxon>Bacillales</taxon>
        <taxon>Bacillaceae</taxon>
        <taxon>Bacillus</taxon>
    </lineage>
</organism>
<feature type="chain" id="PRO_0000318319" description="Protein translocase subunit SecA">
    <location>
        <begin position="1"/>
        <end position="841"/>
    </location>
</feature>
<feature type="region of interest" description="Disordered" evidence="2">
    <location>
        <begin position="788"/>
        <end position="841"/>
    </location>
</feature>
<feature type="compositionally biased region" description="Basic residues" evidence="2">
    <location>
        <begin position="829"/>
        <end position="841"/>
    </location>
</feature>
<feature type="binding site" evidence="1">
    <location>
        <position position="85"/>
    </location>
    <ligand>
        <name>ATP</name>
        <dbReference type="ChEBI" id="CHEBI:30616"/>
    </ligand>
</feature>
<feature type="binding site" evidence="1">
    <location>
        <begin position="103"/>
        <end position="107"/>
    </location>
    <ligand>
        <name>ATP</name>
        <dbReference type="ChEBI" id="CHEBI:30616"/>
    </ligand>
</feature>
<feature type="binding site" evidence="1">
    <location>
        <position position="492"/>
    </location>
    <ligand>
        <name>ATP</name>
        <dbReference type="ChEBI" id="CHEBI:30616"/>
    </ligand>
</feature>
<feature type="binding site" evidence="1">
    <location>
        <position position="825"/>
    </location>
    <ligand>
        <name>Zn(2+)</name>
        <dbReference type="ChEBI" id="CHEBI:29105"/>
    </ligand>
</feature>
<feature type="binding site" evidence="1">
    <location>
        <position position="827"/>
    </location>
    <ligand>
        <name>Zn(2+)</name>
        <dbReference type="ChEBI" id="CHEBI:29105"/>
    </ligand>
</feature>
<feature type="binding site" evidence="1">
    <location>
        <position position="836"/>
    </location>
    <ligand>
        <name>Zn(2+)</name>
        <dbReference type="ChEBI" id="CHEBI:29105"/>
    </ligand>
</feature>
<feature type="binding site" evidence="1">
    <location>
        <position position="837"/>
    </location>
    <ligand>
        <name>Zn(2+)</name>
        <dbReference type="ChEBI" id="CHEBI:29105"/>
    </ligand>
</feature>